<protein>
    <recommendedName>
        <fullName evidence="9">Endoglucanase</fullName>
        <ecNumber evidence="2 3 4 5">3.2.1.4</ecNumber>
    </recommendedName>
    <alternativeName>
        <fullName evidence="6 7 8">CaCel</fullName>
    </alternativeName>
    <alternativeName>
        <fullName evidence="2 6 7 8">Cellulase</fullName>
    </alternativeName>
    <alternativeName>
        <fullName evidence="7 8 12">Endo-beta-1,4-glucanase</fullName>
    </alternativeName>
</protein>
<comment type="function">
    <text evidence="4 5">Hydrolyzes carboxymethylcellulose (CMC) (PubMed:24848382, PubMed:28156112). Also hydrolyzes lichenan and barley beta-1,4-D-glucan. CMC is hydrolyzed majorily to cellobiose (G2), cellotriose (G3) and cellotetraose (G4). Cellohexaose (G6) is hydrolyzed to G4 and G2 with traces of G3. Cellopentaose (G5) is completely hydrolyzed to G2 and G3, and G4 is partially hydrolyzed to G2. Does not hydrolyze G2 or G3. Does not hydrolyze crystalline cellulose, soluble starch, xylan, mannan or laminarin (PubMed:28156112).</text>
</comment>
<comment type="catalytic activity">
    <reaction evidence="2 3 4 5">
        <text>Endohydrolysis of (1-&gt;4)-beta-D-glucosidic linkages in cellulose, lichenin and cereal beta-D-glucans.</text>
        <dbReference type="EC" id="3.2.1.4"/>
    </reaction>
</comment>
<comment type="activity regulation">
    <text evidence="5">Activity is not affected by metal ions except Mn(2+), which reduces the activity by 40-50%. However, no significant change in activity in response to 1 mM EDTA.</text>
</comment>
<comment type="biophysicochemical properties">
    <phDependence>
        <text evidence="4 5">Optimum pH is 3.5 (PubMed:24848382, PubMed:28156112). More than 90% of the maximal activity is maintained between pH range 3-5 (PubMed:24848382). More than 60% of the maximal activity is maintained between pH range 2-8 (PubMed:24848382, PubMed:28156112). About 80% of the maximal activity is maintained even at pH 2.5 (PubMed:28156112).</text>
    </phDependence>
    <temperatureDependence>
        <text evidence="4 5">Optimum temperature is around 40-50 degrees Celsius (PubMed:24848382, PubMed:28156112). Has more than 50% of the maximal activity between 10-70 degrees Celsius, and more than 30% of activity at 0 degrees Celsius. Stable at 50 degrees Celsius for 30 minutes (PubMed:24848382). 60-80% of the maximal activity is retained between 0-10 degrees Celsius. Displays 40% of its maximal activity at as high as 80 degrees Celsius. Remains active at 60 degrees Celsius for over 8 hours. Approximately 50% of the activity is still maintained after 4-hour incubation at 70 degrees Celsius (PubMed:28156112).</text>
    </temperatureDependence>
</comment>
<comment type="subcellular location">
    <subcellularLocation>
        <location evidence="4">Secreted</location>
    </subcellularLocation>
</comment>
<comment type="PTM">
    <text evidence="4">N- and O-glycosylated. Contains hybrid- and complex-type N-glycans.</text>
</comment>
<comment type="biotechnology">
    <text evidence="10 11">Potential use as a cellulase in industry due to its high catalytic activity at low temperature as well as its thermotolerance (PubMed:24848382). Digests green algae (Ulva pertusa) under acidic conditions at 50 degrees Celsius, which suggests that it could be used for biofuel production from seaweeds (PubMed:28156112).</text>
</comment>
<comment type="similarity">
    <text evidence="9">Belongs to the glycosyl hydrolase 45 (cellulase K) family.</text>
</comment>
<accession>D3GDK4</accession>
<sequence length="225" mass="23795">MKVFVVLAAIVAIANGLTSGSGVTTRYWDCCKPSCSWGGKASVTKPVRTCKANGNTTIDSNTQSGCNGGSSYVCNDQQPFTQGNVGYGFAAASISGQPESQTCCACYEMTFTNTAISGQKMIVQVTNTGSDLNGNHFDLMIPGGGVGIFNGCQSQWGAPSNGWGQRYGGISSQSECNQLPTSLRAGCNWRFGWFKNADNPSMKFTQVRCPTILTQKSQCVRTPGP</sequence>
<evidence type="ECO:0000255" key="1">
    <source>
        <dbReference type="PROSITE-ProRule" id="PRU00498"/>
    </source>
</evidence>
<evidence type="ECO:0000255" key="2">
    <source>
        <dbReference type="PROSITE-ProRule" id="PRU10069"/>
    </source>
</evidence>
<evidence type="ECO:0000269" key="3">
    <source>
    </source>
</evidence>
<evidence type="ECO:0000269" key="4">
    <source>
    </source>
</evidence>
<evidence type="ECO:0000269" key="5">
    <source>
    </source>
</evidence>
<evidence type="ECO:0000303" key="6">
    <source>
    </source>
</evidence>
<evidence type="ECO:0000303" key="7">
    <source>
    </source>
</evidence>
<evidence type="ECO:0000303" key="8">
    <source>
    </source>
</evidence>
<evidence type="ECO:0000305" key="9"/>
<evidence type="ECO:0000305" key="10">
    <source>
    </source>
</evidence>
<evidence type="ECO:0000305" key="11">
    <source>
    </source>
</evidence>
<evidence type="ECO:0000312" key="12">
    <source>
        <dbReference type="EMBL" id="ACV50414.1"/>
    </source>
</evidence>
<evidence type="ECO:0000312" key="13">
    <source>
        <dbReference type="EMBL" id="ACV50415.1"/>
    </source>
</evidence>
<evidence type="ECO:0007744" key="14">
    <source>
        <dbReference type="PDB" id="5H4U"/>
    </source>
</evidence>
<evidence type="ECO:0007829" key="15">
    <source>
        <dbReference type="PDB" id="5H4U"/>
    </source>
</evidence>
<keyword id="KW-0002">3D-structure</keyword>
<keyword id="KW-0119">Carbohydrate metabolism</keyword>
<keyword id="KW-0136">Cellulose degradation</keyword>
<keyword id="KW-0903">Direct protein sequencing</keyword>
<keyword id="KW-1015">Disulfide bond</keyword>
<keyword id="KW-0325">Glycoprotein</keyword>
<keyword id="KW-0326">Glycosidase</keyword>
<keyword id="KW-0378">Hydrolase</keyword>
<keyword id="KW-0624">Polysaccharide degradation</keyword>
<keyword id="KW-0964">Secreted</keyword>
<keyword id="KW-0732">Signal</keyword>
<dbReference type="EC" id="3.2.1.4" evidence="2 3 4 5"/>
<dbReference type="EMBL" id="FJ648735">
    <property type="protein sequence ID" value="ACV50414.1"/>
    <property type="molecule type" value="mRNA"/>
</dbReference>
<dbReference type="EMBL" id="FJ648736">
    <property type="protein sequence ID" value="ACV50415.1"/>
    <property type="molecule type" value="Genomic_DNA"/>
</dbReference>
<dbReference type="PDB" id="5H4U">
    <property type="method" value="X-ray"/>
    <property type="resolution" value="2.60 A"/>
    <property type="chains" value="A/B/C=1-225"/>
</dbReference>
<dbReference type="PDBsum" id="5H4U"/>
<dbReference type="SMR" id="D3GDK4"/>
<dbReference type="CAZy" id="GH45">
    <property type="family name" value="Glycoside Hydrolase Family 45"/>
</dbReference>
<dbReference type="BRENDA" id="3.2.1.4">
    <property type="organism ID" value="11159"/>
</dbReference>
<dbReference type="GO" id="GO:0005576">
    <property type="term" value="C:extracellular region"/>
    <property type="evidence" value="ECO:0000314"/>
    <property type="project" value="UniProtKB"/>
</dbReference>
<dbReference type="GO" id="GO:0008810">
    <property type="term" value="F:cellulase activity"/>
    <property type="evidence" value="ECO:0000314"/>
    <property type="project" value="UniProtKB"/>
</dbReference>
<dbReference type="GO" id="GO:0030245">
    <property type="term" value="P:cellulose catabolic process"/>
    <property type="evidence" value="ECO:0000314"/>
    <property type="project" value="UniProtKB"/>
</dbReference>
<dbReference type="CDD" id="cd22278">
    <property type="entry name" value="DPBB_GH45_endoglucanase"/>
    <property type="match status" value="1"/>
</dbReference>
<dbReference type="Gene3D" id="2.40.40.10">
    <property type="entry name" value="RlpA-like domain"/>
    <property type="match status" value="1"/>
</dbReference>
<dbReference type="InterPro" id="IPR052288">
    <property type="entry name" value="GH45_Enzymes"/>
</dbReference>
<dbReference type="InterPro" id="IPR000334">
    <property type="entry name" value="Glyco_hydro_45"/>
</dbReference>
<dbReference type="InterPro" id="IPR036908">
    <property type="entry name" value="RlpA-like_sf"/>
</dbReference>
<dbReference type="PANTHER" id="PTHR39730">
    <property type="entry name" value="ENDOGLUCANASE 1"/>
    <property type="match status" value="1"/>
</dbReference>
<dbReference type="PANTHER" id="PTHR39730:SF1">
    <property type="entry name" value="ENDOGLUCANASE 1"/>
    <property type="match status" value="1"/>
</dbReference>
<dbReference type="Pfam" id="PF02015">
    <property type="entry name" value="Glyco_hydro_45"/>
    <property type="match status" value="1"/>
</dbReference>
<dbReference type="SUPFAM" id="SSF50685">
    <property type="entry name" value="Barwin-like endoglucanases"/>
    <property type="match status" value="1"/>
</dbReference>
<dbReference type="PROSITE" id="PS01140">
    <property type="entry name" value="GLYCOSYL_HYDROL_F45"/>
    <property type="match status" value="1"/>
</dbReference>
<proteinExistence type="evidence at protein level"/>
<name>GUN_CRYAT</name>
<reference evidence="12 13" key="1">
    <citation type="submission" date="2009-01" db="EMBL/GenBank/DDBJ databases">
        <title>Molecular cloning and characterization of a novel endo-beta-1,4-glucanase from the Antarctic springtail, Cryptopygus antarcticus.</title>
        <authorList>
            <person name="Song J.M."/>
            <person name="Lee Y.-H."/>
        </authorList>
    </citation>
    <scope>NUCLEOTIDE SEQUENCE [GENOMIC DNA / MRNA]</scope>
</reference>
<reference key="2">
    <citation type="journal article" date="2014" name="Mol. Biotechnol.">
        <title>Characterization of Cryptopygus antarcticus endo-beta-1,4-glucanase from Bombyx mori expression systems.</title>
        <authorList>
            <person name="Hong S.M."/>
            <person name="Sung H.S."/>
            <person name="Kang M.H."/>
            <person name="Kim C.G."/>
            <person name="Lee Y.H."/>
            <person name="Kim D.J."/>
            <person name="Lee J.M."/>
            <person name="Kusakabe T."/>
        </authorList>
    </citation>
    <scope>PROTEIN SEQUENCE OF 16-25</scope>
    <scope>FUNCTION</scope>
    <scope>CATALYTIC ACTIVITY</scope>
    <scope>BIOPHYSICOCHEMICAL PROPERTIES</scope>
    <scope>SUBCELLULAR LOCATION</scope>
    <scope>GLYCOSYLATION</scope>
    <scope>BIOTECHNOLOGY</scope>
</reference>
<reference key="3">
    <citation type="journal article" date="2012" name="Protein Expr. Purif.">
        <title>Cultivation at 6-10 degrees C is an effective strategy to overcome the insolubility of recombinant proteins in Escherichia coli.</title>
        <authorList>
            <person name="Song J.M."/>
            <person name="An Y.J."/>
            <person name="Kang M.H."/>
            <person name="Lee Y.H."/>
            <person name="Cha S.S."/>
        </authorList>
    </citation>
    <scope>CATALYTIC ACTIVITY</scope>
</reference>
<reference evidence="14" key="4">
    <citation type="journal article" date="2017" name="J. Agric. Food Chem.">
        <title>Genetic and Structural Characterization of a Thermo-Tolerant, Cold-Active, and Acidic Endo-beta-1,4-glucanase from Antarctic Springtail, Cryptopygus antarcticus.</title>
        <authorList>
            <person name="Song J.M."/>
            <person name="Hong S.K."/>
            <person name="An Y.J."/>
            <person name="Kang M.H."/>
            <person name="Hong K.H."/>
            <person name="Lee Y.H."/>
            <person name="Cha S.S."/>
        </authorList>
    </citation>
    <scope>X-RAY CRYSTALLOGRAPHY (2.60 ANGSTROMS)</scope>
    <scope>FUNCTION</scope>
    <scope>CATALYTIC ACTIVITY</scope>
    <scope>ACTIVITY REGULATION</scope>
    <scope>BIOPHYSICOCHEMICAL PROPERTIES</scope>
    <scope>SUBSTRATE SPECIFICITY</scope>
    <scope>BIOTECHNOLOGY</scope>
    <scope>DISULFIDE BONDS</scope>
</reference>
<organism evidence="12">
    <name type="scientific">Cryptopygus antarcticus</name>
    <name type="common">Antarctic springtail</name>
    <dbReference type="NCBI Taxonomy" id="187623"/>
    <lineage>
        <taxon>Eukaryota</taxon>
        <taxon>Metazoa</taxon>
        <taxon>Ecdysozoa</taxon>
        <taxon>Arthropoda</taxon>
        <taxon>Hexapoda</taxon>
        <taxon>Collembola</taxon>
        <taxon>Entomobryomorpha</taxon>
        <taxon>Isotomoidea</taxon>
        <taxon>Isotomidae</taxon>
        <taxon>Anurophorinae</taxon>
        <taxon>Cryptopygus</taxon>
        <taxon>Cryptopygus antarcticus complex</taxon>
    </lineage>
</organism>
<feature type="signal peptide" evidence="4">
    <location>
        <begin position="1"/>
        <end position="15"/>
    </location>
</feature>
<feature type="chain" id="PRO_5010494529" description="Endoglucanase" evidence="10">
    <location>
        <begin position="16"/>
        <end position="225"/>
    </location>
</feature>
<feature type="active site" description="Nucleophile" evidence="2 11">
    <location>
        <position position="29"/>
    </location>
</feature>
<feature type="active site" description="Proton donor" evidence="11">
    <location>
        <position position="138"/>
    </location>
</feature>
<feature type="glycosylation site" description="N-linked (GlcNAc...) asparagine" evidence="1">
    <location>
        <position position="55"/>
    </location>
</feature>
<feature type="disulfide bond" evidence="5 14">
    <location>
        <begin position="30"/>
        <end position="152"/>
    </location>
</feature>
<feature type="disulfide bond" evidence="5 14">
    <location>
        <begin position="31"/>
        <end position="66"/>
    </location>
</feature>
<feature type="disulfide bond" evidence="5 14">
    <location>
        <begin position="35"/>
        <end position="103"/>
    </location>
</feature>
<feature type="disulfide bond" evidence="5 14">
    <location>
        <begin position="50"/>
        <end position="74"/>
    </location>
</feature>
<feature type="disulfide bond" evidence="5 14">
    <location>
        <begin position="104"/>
        <end position="219"/>
    </location>
</feature>
<feature type="disulfide bond" evidence="5 14">
    <location>
        <begin position="106"/>
        <end position="209"/>
    </location>
</feature>
<feature type="disulfide bond" evidence="5 14">
    <location>
        <begin position="176"/>
        <end position="187"/>
    </location>
</feature>
<feature type="sequence conflict" description="In Ref. 2; AA sequence." evidence="9" ref="2">
    <original>GL</original>
    <variation>MV</variation>
    <location>
        <begin position="16"/>
        <end position="17"/>
    </location>
</feature>
<feature type="sequence conflict" description="In Ref. 2; AA sequence." evidence="9" ref="2">
    <original>G</original>
    <variation>I</variation>
    <location>
        <position position="16"/>
    </location>
</feature>
<feature type="strand" evidence="15">
    <location>
        <begin position="19"/>
        <end position="27"/>
    </location>
</feature>
<feature type="helix" evidence="15">
    <location>
        <begin position="34"/>
        <end position="36"/>
    </location>
</feature>
<feature type="strand" evidence="15">
    <location>
        <begin position="40"/>
        <end position="45"/>
    </location>
</feature>
<feature type="strand" evidence="15">
    <location>
        <begin position="54"/>
        <end position="57"/>
    </location>
</feature>
<feature type="helix" evidence="15">
    <location>
        <begin position="65"/>
        <end position="67"/>
    </location>
</feature>
<feature type="strand" evidence="15">
    <location>
        <begin position="69"/>
        <end position="72"/>
    </location>
</feature>
<feature type="helix" evidence="15">
    <location>
        <begin position="75"/>
        <end position="77"/>
    </location>
</feature>
<feature type="strand" evidence="15">
    <location>
        <begin position="80"/>
        <end position="82"/>
    </location>
</feature>
<feature type="strand" evidence="15">
    <location>
        <begin position="85"/>
        <end position="96"/>
    </location>
</feature>
<feature type="helix" evidence="15">
    <location>
        <begin position="99"/>
        <end position="102"/>
    </location>
</feature>
<feature type="strand" evidence="15">
    <location>
        <begin position="106"/>
        <end position="111"/>
    </location>
</feature>
<feature type="turn" evidence="15">
    <location>
        <begin position="115"/>
        <end position="118"/>
    </location>
</feature>
<feature type="strand" evidence="15">
    <location>
        <begin position="120"/>
        <end position="128"/>
    </location>
</feature>
<feature type="strand" evidence="15">
    <location>
        <begin position="133"/>
        <end position="140"/>
    </location>
</feature>
<feature type="helix" evidence="15">
    <location>
        <begin position="152"/>
        <end position="156"/>
    </location>
</feature>
<feature type="strand" evidence="15">
    <location>
        <begin position="163"/>
        <end position="165"/>
    </location>
</feature>
<feature type="turn" evidence="15">
    <location>
        <begin position="166"/>
        <end position="168"/>
    </location>
</feature>
<feature type="helix" evidence="15">
    <location>
        <begin position="173"/>
        <end position="178"/>
    </location>
</feature>
<feature type="helix" evidence="15">
    <location>
        <begin position="181"/>
        <end position="183"/>
    </location>
</feature>
<feature type="helix" evidence="15">
    <location>
        <begin position="184"/>
        <end position="191"/>
    </location>
</feature>
<feature type="strand" evidence="15">
    <location>
        <begin position="201"/>
        <end position="207"/>
    </location>
</feature>
<feature type="helix" evidence="15">
    <location>
        <begin position="211"/>
        <end position="217"/>
    </location>
</feature>